<evidence type="ECO:0000250" key="1">
    <source>
        <dbReference type="UniProtKB" id="A0A140N5J7"/>
    </source>
</evidence>
<evidence type="ECO:0000250" key="2">
    <source>
        <dbReference type="UniProtKB" id="P67653"/>
    </source>
</evidence>
<evidence type="ECO:0000305" key="3"/>
<name>KDSC_SALTY</name>
<sequence length="188" mass="20071">MSKAGASLATCYGPVSPHVMTKAENIRLLILDVDGVLSDGLIYMGNNGEELKAFNVRDGYGIRCALTSNIEVAIITGRKAKLVEDRCATLGIVHLYQGQSNKLIAFSDLLEKLAIAPENVAYVGDDLIDWPVMEKVGLSVAVADAHPLLIPRADYVTHIAGGRGAVREVCDLLLLAQGKLDEAKGQSI</sequence>
<comment type="function">
    <text evidence="1">Catalyzes the hydrolysis of 3-deoxy-D-manno-octulosonate 8-phosphate (KDO 8-P) to 3-deoxy-D-manno-octulosonate (KDO) and inorganic phosphate.</text>
</comment>
<comment type="catalytic activity">
    <reaction evidence="1">
        <text>3-deoxy-alpha-D-manno-2-octulosonate-8-phosphate + H2O = 3-deoxy-alpha-D-manno-oct-2-ulosonate + phosphate</text>
        <dbReference type="Rhea" id="RHEA:11500"/>
        <dbReference type="ChEBI" id="CHEBI:15377"/>
        <dbReference type="ChEBI" id="CHEBI:43474"/>
        <dbReference type="ChEBI" id="CHEBI:85985"/>
        <dbReference type="ChEBI" id="CHEBI:85986"/>
        <dbReference type="EC" id="3.1.3.45"/>
    </reaction>
</comment>
<comment type="cofactor">
    <cofactor evidence="1">
        <name>Mg(2+)</name>
        <dbReference type="ChEBI" id="CHEBI:18420"/>
    </cofactor>
</comment>
<comment type="pathway">
    <text evidence="1">Carbohydrate biosynthesis; 3-deoxy-D-manno-octulosonate biosynthesis; 3-deoxy-D-manno-octulosonate from D-ribulose 5-phosphate: step 3/3.</text>
</comment>
<comment type="pathway">
    <text evidence="1">Bacterial outer membrane biogenesis; lipopolysaccharide biosynthesis.</text>
</comment>
<comment type="subunit">
    <text evidence="1">Homotetramer.</text>
</comment>
<comment type="similarity">
    <text evidence="3">Belongs to the KdsC family.</text>
</comment>
<reference key="1">
    <citation type="journal article" date="2001" name="Nature">
        <title>Complete genome sequence of Salmonella enterica serovar Typhimurium LT2.</title>
        <authorList>
            <person name="McClelland M."/>
            <person name="Sanderson K.E."/>
            <person name="Spieth J."/>
            <person name="Clifton S.W."/>
            <person name="Latreille P."/>
            <person name="Courtney L."/>
            <person name="Porwollik S."/>
            <person name="Ali J."/>
            <person name="Dante M."/>
            <person name="Du F."/>
            <person name="Hou S."/>
            <person name="Layman D."/>
            <person name="Leonard S."/>
            <person name="Nguyen C."/>
            <person name="Scott K."/>
            <person name="Holmes A."/>
            <person name="Grewal N."/>
            <person name="Mulvaney E."/>
            <person name="Ryan E."/>
            <person name="Sun H."/>
            <person name="Florea L."/>
            <person name="Miller W."/>
            <person name="Stoneking T."/>
            <person name="Nhan M."/>
            <person name="Waterston R."/>
            <person name="Wilson R.K."/>
        </authorList>
    </citation>
    <scope>NUCLEOTIDE SEQUENCE [LARGE SCALE GENOMIC DNA]</scope>
    <source>
        <strain>LT2 / SGSC1412 / ATCC 700720</strain>
    </source>
</reference>
<gene>
    <name type="primary">kdsC</name>
    <name type="ordered locus">STM3316</name>
</gene>
<accession>Q8ZLS0</accession>
<feature type="chain" id="PRO_0000201700" description="3-deoxy-D-manno-octulosonate 8-phosphate phosphatase KdsC">
    <location>
        <begin position="1"/>
        <end position="188"/>
    </location>
</feature>
<feature type="binding site" evidence="2">
    <location>
        <position position="32"/>
    </location>
    <ligand>
        <name>Mg(2+)</name>
        <dbReference type="ChEBI" id="CHEBI:18420"/>
    </ligand>
</feature>
<feature type="binding site" evidence="2">
    <location>
        <position position="34"/>
    </location>
    <ligand>
        <name>Mg(2+)</name>
        <dbReference type="ChEBI" id="CHEBI:18420"/>
    </ligand>
</feature>
<feature type="binding site" evidence="2">
    <location>
        <position position="34"/>
    </location>
    <ligand>
        <name>substrate</name>
    </ligand>
</feature>
<feature type="binding site" evidence="2">
    <location>
        <begin position="55"/>
        <end position="59"/>
    </location>
    <ligand>
        <name>substrate</name>
    </ligand>
</feature>
<feature type="binding site" evidence="2">
    <location>
        <position position="63"/>
    </location>
    <ligand>
        <name>substrate</name>
    </ligand>
</feature>
<feature type="binding site" evidence="2">
    <location>
        <position position="78"/>
    </location>
    <ligand>
        <name>substrate</name>
    </ligand>
</feature>
<feature type="binding site" evidence="2">
    <location>
        <position position="86"/>
    </location>
    <ligand>
        <name>substrate</name>
    </ligand>
</feature>
<feature type="binding site" evidence="2">
    <location>
        <position position="102"/>
    </location>
    <ligand>
        <name>substrate</name>
    </ligand>
</feature>
<feature type="binding site" evidence="2">
    <location>
        <position position="125"/>
    </location>
    <ligand>
        <name>Mg(2+)</name>
        <dbReference type="ChEBI" id="CHEBI:18420"/>
    </ligand>
</feature>
<keyword id="KW-0378">Hydrolase</keyword>
<keyword id="KW-0448">Lipopolysaccharide biosynthesis</keyword>
<keyword id="KW-0460">Magnesium</keyword>
<keyword id="KW-0479">Metal-binding</keyword>
<keyword id="KW-1185">Reference proteome</keyword>
<dbReference type="EC" id="3.1.3.45" evidence="1"/>
<dbReference type="EMBL" id="AE006468">
    <property type="protein sequence ID" value="AAL22185.1"/>
    <property type="molecule type" value="Genomic_DNA"/>
</dbReference>
<dbReference type="RefSeq" id="WP_000030021.1">
    <property type="nucleotide sequence ID" value="NC_003197.2"/>
</dbReference>
<dbReference type="SMR" id="Q8ZLS0"/>
<dbReference type="STRING" id="99287.STM3316"/>
<dbReference type="PaxDb" id="99287-STM3316"/>
<dbReference type="KEGG" id="stm:STM3316"/>
<dbReference type="PATRIC" id="fig|99287.12.peg.3517"/>
<dbReference type="HOGENOM" id="CLU_106694_0_1_6"/>
<dbReference type="OMA" id="GMTLWQK"/>
<dbReference type="PhylomeDB" id="Q8ZLS0"/>
<dbReference type="BioCyc" id="SENT99287:STM3316-MONOMER"/>
<dbReference type="UniPathway" id="UPA00030"/>
<dbReference type="UniPathway" id="UPA00357">
    <property type="reaction ID" value="UER00475"/>
</dbReference>
<dbReference type="Proteomes" id="UP000001014">
    <property type="component" value="Chromosome"/>
</dbReference>
<dbReference type="GO" id="GO:0019143">
    <property type="term" value="F:3-deoxy-manno-octulosonate-8-phosphatase activity"/>
    <property type="evidence" value="ECO:0007669"/>
    <property type="project" value="UniProtKB-EC"/>
</dbReference>
<dbReference type="GO" id="GO:0046872">
    <property type="term" value="F:metal ion binding"/>
    <property type="evidence" value="ECO:0007669"/>
    <property type="project" value="UniProtKB-KW"/>
</dbReference>
<dbReference type="GO" id="GO:0009103">
    <property type="term" value="P:lipopolysaccharide biosynthetic process"/>
    <property type="evidence" value="ECO:0007669"/>
    <property type="project" value="UniProtKB-UniPathway"/>
</dbReference>
<dbReference type="CDD" id="cd01630">
    <property type="entry name" value="HAD_KDO-like"/>
    <property type="match status" value="1"/>
</dbReference>
<dbReference type="FunFam" id="3.40.50.1000:FF:000029">
    <property type="entry name" value="3-deoxy-D-manno-octulosonate 8-phosphate phosphatase KdsC"/>
    <property type="match status" value="1"/>
</dbReference>
<dbReference type="Gene3D" id="3.40.50.1000">
    <property type="entry name" value="HAD superfamily/HAD-like"/>
    <property type="match status" value="1"/>
</dbReference>
<dbReference type="InterPro" id="IPR050793">
    <property type="entry name" value="CMP-NeuNAc_synthase"/>
</dbReference>
<dbReference type="InterPro" id="IPR036412">
    <property type="entry name" value="HAD-like_sf"/>
</dbReference>
<dbReference type="InterPro" id="IPR023214">
    <property type="entry name" value="HAD_sf"/>
</dbReference>
<dbReference type="InterPro" id="IPR010023">
    <property type="entry name" value="KdsC_fam"/>
</dbReference>
<dbReference type="NCBIfam" id="TIGR01670">
    <property type="entry name" value="KdsC-phosphatas"/>
    <property type="match status" value="1"/>
</dbReference>
<dbReference type="NCBIfam" id="NF007019">
    <property type="entry name" value="PRK09484.1"/>
    <property type="match status" value="1"/>
</dbReference>
<dbReference type="PANTHER" id="PTHR21485">
    <property type="entry name" value="HAD SUPERFAMILY MEMBERS CMAS AND KDSC"/>
    <property type="match status" value="1"/>
</dbReference>
<dbReference type="PANTHER" id="PTHR21485:SF6">
    <property type="entry name" value="N-ACYLNEURAMINATE CYTIDYLYLTRANSFERASE-RELATED"/>
    <property type="match status" value="1"/>
</dbReference>
<dbReference type="Pfam" id="PF08282">
    <property type="entry name" value="Hydrolase_3"/>
    <property type="match status" value="1"/>
</dbReference>
<dbReference type="PIRSF" id="PIRSF006118">
    <property type="entry name" value="KDO8-P_Ptase"/>
    <property type="match status" value="1"/>
</dbReference>
<dbReference type="SFLD" id="SFLDG01138">
    <property type="entry name" value="C1.6.2:_Deoxy-d-mannose-octulo"/>
    <property type="match status" value="1"/>
</dbReference>
<dbReference type="SFLD" id="SFLDS00003">
    <property type="entry name" value="Haloacid_Dehalogenase"/>
    <property type="match status" value="1"/>
</dbReference>
<dbReference type="SUPFAM" id="SSF56784">
    <property type="entry name" value="HAD-like"/>
    <property type="match status" value="1"/>
</dbReference>
<protein>
    <recommendedName>
        <fullName>3-deoxy-D-manno-octulosonate 8-phosphate phosphatase KdsC</fullName>
        <ecNumber evidence="1">3.1.3.45</ecNumber>
    </recommendedName>
    <alternativeName>
        <fullName>KDO 8-P phosphatase</fullName>
    </alternativeName>
</protein>
<organism>
    <name type="scientific">Salmonella typhimurium (strain LT2 / SGSC1412 / ATCC 700720)</name>
    <dbReference type="NCBI Taxonomy" id="99287"/>
    <lineage>
        <taxon>Bacteria</taxon>
        <taxon>Pseudomonadati</taxon>
        <taxon>Pseudomonadota</taxon>
        <taxon>Gammaproteobacteria</taxon>
        <taxon>Enterobacterales</taxon>
        <taxon>Enterobacteriaceae</taxon>
        <taxon>Salmonella</taxon>
    </lineage>
</organism>
<proteinExistence type="inferred from homology"/>